<feature type="signal peptide" evidence="3">
    <location>
        <begin position="1"/>
        <end position="30"/>
    </location>
</feature>
<feature type="propeptide" id="PRO_0000027124">
    <location>
        <begin position="31"/>
        <end position="151"/>
    </location>
</feature>
<feature type="chain" id="PRO_0000027125" description="Proprotein convertase subtilisin/kexin type 9">
    <location>
        <begin position="152"/>
        <end position="691"/>
    </location>
</feature>
<feature type="domain" description="Peptidase S8" evidence="4">
    <location>
        <begin position="154"/>
        <end position="441"/>
    </location>
</feature>
<feature type="region of interest" description="C-terminal domain" evidence="1">
    <location>
        <begin position="449"/>
        <end position="691"/>
    </location>
</feature>
<feature type="short sequence motif" description="Cell attachment site" evidence="3">
    <location>
        <begin position="495"/>
        <end position="497"/>
    </location>
</feature>
<feature type="active site" description="Charge relay system" evidence="4">
    <location>
        <position position="185"/>
    </location>
</feature>
<feature type="active site" description="Charge relay system" evidence="4">
    <location>
        <position position="225"/>
    </location>
</feature>
<feature type="active site" description="Charge relay system" evidence="4">
    <location>
        <position position="385"/>
    </location>
</feature>
<feature type="site" description="Cleavage; by autolysis">
    <location>
        <begin position="151"/>
        <end position="152"/>
    </location>
</feature>
<feature type="site" description="Cleavage; by furin and PCSK5" evidence="1">
    <location>
        <begin position="217"/>
        <end position="218"/>
    </location>
</feature>
<feature type="modified residue" description="Sulfotyrosine" evidence="1">
    <location>
        <position position="37"/>
    </location>
</feature>
<feature type="modified residue" description="Phosphoserine" evidence="2">
    <location>
        <position position="46"/>
    </location>
</feature>
<feature type="modified residue" description="Phosphoserine" evidence="2">
    <location>
        <position position="687"/>
    </location>
</feature>
<feature type="glycosylation site" description="N-linked (GlcNAc...) asparagine" evidence="1">
    <location>
        <position position="532"/>
    </location>
</feature>
<feature type="disulfide bond" evidence="3">
    <location>
        <begin position="222"/>
        <end position="254"/>
    </location>
</feature>
<feature type="disulfide bond" evidence="3">
    <location>
        <begin position="322"/>
        <end position="357"/>
    </location>
</feature>
<feature type="disulfide bond" evidence="3">
    <location>
        <begin position="456"/>
        <end position="526"/>
    </location>
</feature>
<feature type="disulfide bond" evidence="3">
    <location>
        <begin position="476"/>
        <end position="525"/>
    </location>
</feature>
<feature type="disulfide bond" evidence="3">
    <location>
        <begin position="485"/>
        <end position="508"/>
    </location>
</feature>
<feature type="disulfide bond" evidence="3">
    <location>
        <begin position="533"/>
        <end position="600"/>
    </location>
</feature>
<feature type="disulfide bond" evidence="3">
    <location>
        <begin position="551"/>
        <end position="599"/>
    </location>
</feature>
<feature type="disulfide bond" evidence="3">
    <location>
        <begin position="561"/>
        <end position="587"/>
    </location>
</feature>
<feature type="disulfide bond" evidence="3">
    <location>
        <begin position="607"/>
        <end position="678"/>
    </location>
</feature>
<feature type="disulfide bond" evidence="3">
    <location>
        <begin position="625"/>
        <end position="677"/>
    </location>
</feature>
<feature type="disulfide bond" evidence="3">
    <location>
        <begin position="634"/>
        <end position="653"/>
    </location>
</feature>
<feature type="mutagenesis site" description="No effect; when associated with A-152." evidence="5">
    <original>Q</original>
    <variation>E</variation>
    <variation>N</variation>
    <location>
        <position position="151"/>
    </location>
</feature>
<feature type="mutagenesis site" description="Abolishes autocleavage; when associated with V-152." evidence="5">
    <original>Q</original>
    <variation>I</variation>
    <location>
        <position position="151"/>
    </location>
</feature>
<feature type="mutagenesis site" description="No effect; when associated with E-151 or N-151." evidence="5">
    <original>S</original>
    <variation>A</variation>
    <location>
        <position position="152"/>
    </location>
</feature>
<feature type="mutagenesis site" description="Abolishes autocleavage; when associated with I-151." evidence="5">
    <original>S</original>
    <variation>V</variation>
    <location>
        <position position="152"/>
    </location>
</feature>
<feature type="mutagenesis site" description="Abolishes autocleavage." evidence="5">
    <original>H</original>
    <variation>W</variation>
    <location>
        <position position="225"/>
    </location>
</feature>
<feature type="mutagenesis site" description="Abolishes autocleavage." evidence="5">
    <original>S</original>
    <variation>A</variation>
    <location>
        <position position="385"/>
    </location>
</feature>
<comment type="function">
    <text evidence="1">Crucial player in the regulation of plasma cholesterol homeostasis. Binds to low-density lipid receptor family members: low density lipoprotein receptor (LDLR), very low density lipoprotein receptor (VLDLR), apolipoprotein E receptor (LRP1/APOER) and apolipoprotein receptor 2 (LRP8/APOER2), and promotes their degradation in intracellular acidic compartments. Acts via a non-proteolytic mechanism to enhance the degradation of the hepatic LDLR through a clathrin LDLRAP1/ARH-mediated pathway. May prevent the recycling of LDLR from endosomes to the cell surface or direct it to lysosomes for degradation. Can induce ubiquitination of LDLR leading to its subsequent degradation. Inhibits intracellular degradation of APOB via the autophagosome/lysosome pathway in a LDLR-independent manner. Involved in the disposal of non-acetylated intermediates of BACE1 in the early secretory pathway. Inhibits epithelial Na(+) channel (ENaC)-mediated Na(+) absorption by reducing ENaC surface expression primarily by increasing its proteasomal degradation. Regulates neuronal apoptosis via modulation of LRP8/APOER2 levels and related anti-apoptotic signaling pathways (By similarity).</text>
</comment>
<comment type="cofactor">
    <cofactor evidence="1">
        <name>Ca(2+)</name>
        <dbReference type="ChEBI" id="CHEBI:29108"/>
    </cofactor>
</comment>
<comment type="activity regulation">
    <text evidence="1">Its proteolytic activity is autoinhibited by the non-covalent binding of the propeptide to the catalytic domain. Inhibited by EGTA (By similarity).</text>
</comment>
<comment type="biophysicochemical properties">
    <phDependence>
        <text>Optimum pH is 8-11.</text>
    </phDependence>
    <temperatureDependence>
        <text>Optimum temperature is 37 degrees Celsius.</text>
    </temperatureDependence>
</comment>
<comment type="subunit">
    <text evidence="2">Monomer. Can self-associate to form dimers and higher multimers which may have increased LDLR degrading activity. The precursor protein but not the mature protein may form multimers. Interacts with APOB, VLDLR, LRP8/APOER2 and BACE1. The full-length immature form (pro-PCSK9) interacts with SCNN1A, SCNN1B and SCNN1G. The pro-PCSK9 form (via C-terminal domain) interacts with LDLR. Interacts (via the C-terminal domain) with ANXA2 (via repeat Annexin 1); the interaction inhibits the degradation of LDLR.</text>
</comment>
<comment type="subcellular location">
    <subcellularLocation>
        <location evidence="1">Cytoplasm</location>
    </subcellularLocation>
    <subcellularLocation>
        <location evidence="1">Secreted</location>
    </subcellularLocation>
    <subcellularLocation>
        <location evidence="1">Endosome</location>
    </subcellularLocation>
    <subcellularLocation>
        <location evidence="1">Lysosome</location>
    </subcellularLocation>
    <subcellularLocation>
        <location evidence="1">Cell surface</location>
    </subcellularLocation>
    <subcellularLocation>
        <location evidence="1">Endoplasmic reticulum</location>
    </subcellularLocation>
    <subcellularLocation>
        <location evidence="1">Golgi apparatus</location>
    </subcellularLocation>
    <text evidence="1">Autocatalytic cleavage is required to transport it from the endoplasmic reticulum to the Golgi apparatus and for the secretion of the mature protein. Localizes to the endoplasmic reticulum in the absence of LDLR and colocalizes to the cell surface and to the endosomes/lysosomes in the presence of LDLR. The sorting to the cell surface and endosomes is required in order to fully promote LDLR degradation (By similarity).</text>
</comment>
<comment type="tissue specificity">
    <text>Highly expressed in 12-day embryo. In the adult, strongly expressed in liver, small intestine, jejunum, and to a lesser extent in kidney, lung, spleen and thymus. Expression in the liver is up-regulated following partial hepatectomy.</text>
</comment>
<comment type="domain">
    <text evidence="1">The C-terminal domain (CRD) is essential for the LDLR-binding and degrading activities.</text>
</comment>
<comment type="domain">
    <text evidence="1">The catalytic domain is responsible for mediating its self-association.</text>
</comment>
<comment type="PTM">
    <text evidence="1">Cleavage by furin and PCSK5 generates a truncated inactive protein that is unable to induce LDLR degradation.</text>
</comment>
<comment type="PTM">
    <text evidence="1">Undergoes autocatalytic cleavage in the endoplasmic reticulum to release the propeptide from the N-terminus and the cleavage of the propeptide is strictly required for its maturation and activation. The cleaved propeptide however remains associated with the catalytic domain through non-covalent interactions, preventing potential substrates from accessing its active site. As a result, it is secreted from cells as a propeptide-containing, enzymatically inactive protein (By similarity).</text>
</comment>
<comment type="PTM">
    <text evidence="1">Phosphorylation protects the propeptide against proteolysis.</text>
</comment>
<comment type="similarity">
    <text evidence="6">Belongs to the peptidase S8 family.</text>
</comment>
<comment type="sequence caution" evidence="6">
    <conflict type="erroneous initiation">
        <sequence resource="EMBL-CDS" id="CAC60363"/>
    </conflict>
    <text>Extended N-terminus.</text>
</comment>
<evidence type="ECO:0000250" key="1"/>
<evidence type="ECO:0000250" key="2">
    <source>
        <dbReference type="UniProtKB" id="Q8NBP7"/>
    </source>
</evidence>
<evidence type="ECO:0000255" key="3"/>
<evidence type="ECO:0000255" key="4">
    <source>
        <dbReference type="PROSITE-ProRule" id="PRU01240"/>
    </source>
</evidence>
<evidence type="ECO:0000269" key="5">
    <source>
    </source>
</evidence>
<evidence type="ECO:0000305" key="6"/>
<keyword id="KW-0053">Apoptosis</keyword>
<keyword id="KW-0068">Autocatalytic cleavage</keyword>
<keyword id="KW-0106">Calcium</keyword>
<keyword id="KW-0153">Cholesterol metabolism</keyword>
<keyword id="KW-0963">Cytoplasm</keyword>
<keyword id="KW-1015">Disulfide bond</keyword>
<keyword id="KW-0256">Endoplasmic reticulum</keyword>
<keyword id="KW-0967">Endosome</keyword>
<keyword id="KW-0325">Glycoprotein</keyword>
<keyword id="KW-0333">Golgi apparatus</keyword>
<keyword id="KW-0378">Hydrolase</keyword>
<keyword id="KW-0443">Lipid metabolism</keyword>
<keyword id="KW-0458">Lysosome</keyword>
<keyword id="KW-0597">Phosphoprotein</keyword>
<keyword id="KW-0645">Protease</keyword>
<keyword id="KW-1185">Reference proteome</keyword>
<keyword id="KW-0964">Secreted</keyword>
<keyword id="KW-0720">Serine protease</keyword>
<keyword id="KW-0732">Signal</keyword>
<keyword id="KW-0753">Steroid metabolism</keyword>
<keyword id="KW-1207">Sterol metabolism</keyword>
<keyword id="KW-0765">Sulfation</keyword>
<keyword id="KW-0865">Zymogen</keyword>
<organism>
    <name type="scientific">Rattus norvegicus</name>
    <name type="common">Rat</name>
    <dbReference type="NCBI Taxonomy" id="10116"/>
    <lineage>
        <taxon>Eukaryota</taxon>
        <taxon>Metazoa</taxon>
        <taxon>Chordata</taxon>
        <taxon>Craniata</taxon>
        <taxon>Vertebrata</taxon>
        <taxon>Euteleostomi</taxon>
        <taxon>Mammalia</taxon>
        <taxon>Eutheria</taxon>
        <taxon>Euarchontoglires</taxon>
        <taxon>Glires</taxon>
        <taxon>Rodentia</taxon>
        <taxon>Myomorpha</taxon>
        <taxon>Muroidea</taxon>
        <taxon>Muridae</taxon>
        <taxon>Murinae</taxon>
        <taxon>Rattus</taxon>
    </lineage>
</organism>
<gene>
    <name type="primary">Pcsk9</name>
    <name type="synonym">Narc1</name>
</gene>
<name>PCSK9_RAT</name>
<reference key="1">
    <citation type="patent" date="2001-08-09" number="WO0157081">
        <title>Narc-1, novel subtilase-like homologs.</title>
        <authorList>
            <person name="Chiang L.W."/>
        </authorList>
    </citation>
    <scope>NUCLEOTIDE SEQUENCE</scope>
</reference>
<reference key="2">
    <citation type="submission" date="2004-12" db="EMBL/GenBank/DDBJ databases">
        <title>Rat proprotein convertase subtilisin/kexin type 9.</title>
        <authorList>
            <person name="Petkov P."/>
            <person name="Grozdanov P."/>
            <person name="Hadjiolova K."/>
            <person name="Karagyozov L."/>
            <person name="Dabeva M."/>
        </authorList>
    </citation>
    <scope>NUCLEOTIDE SEQUENCE [MRNA]</scope>
    <source>
        <strain>Sprague-Dawley</strain>
        <tissue>Liver</tissue>
    </source>
</reference>
<reference key="3">
    <citation type="journal article" date="2004" name="Genome Res.">
        <title>The status, quality, and expansion of the NIH full-length cDNA project: the Mammalian Gene Collection (MGC).</title>
        <authorList>
            <consortium name="The MGC Project Team"/>
        </authorList>
    </citation>
    <scope>NUCLEOTIDE SEQUENCE [LARGE SCALE MRNA]</scope>
    <source>
        <tissue>Liver</tissue>
    </source>
</reference>
<reference key="4">
    <citation type="journal article" date="2003" name="Proc. Natl. Acad. Sci. U.S.A.">
        <title>The secretory proprotein convertase neural apoptosis-regulated convertase 1 (NARC-1): liver regeneration and neuronal differentiation.</title>
        <authorList>
            <person name="Seidah N.G."/>
            <person name="Benjannet S."/>
            <person name="Wickham L."/>
            <person name="Marcinkiewicz J."/>
            <person name="Jasmin S.B."/>
            <person name="Stifani S."/>
            <person name="Basak A."/>
            <person name="Prat A."/>
            <person name="Chretien M."/>
        </authorList>
    </citation>
    <scope>CHARACTERIZATION</scope>
</reference>
<reference key="5">
    <citation type="journal article" date="2003" name="Arch. Biochem. Biophys.">
        <title>Functional characterization of Narc 1, a novel proteinase related to proteinase K.</title>
        <authorList>
            <person name="Naureckiene S."/>
            <person name="Ma L."/>
            <person name="Sreekumar K."/>
            <person name="Purandare U."/>
            <person name="Lo C.F."/>
            <person name="Huang Y."/>
            <person name="Chiang L.W."/>
            <person name="Grenier J.M."/>
            <person name="Ozenberger B.A."/>
            <person name="Jacobsen J.S."/>
            <person name="Kennedy J.D."/>
            <person name="DiStefano P.S."/>
            <person name="Wood A."/>
            <person name="Bingham B."/>
        </authorList>
    </citation>
    <scope>CHARACTERIZATION</scope>
    <scope>AUTOCATALYTIC CLEAVAGE SITE</scope>
    <scope>MUTAGENESIS OF GLN-151; SER-152; HIS-225 AND SER-385</scope>
</reference>
<accession>P59996</accession>
<accession>Q5I6U6</accession>
<dbReference type="EC" id="3.4.21.-"/>
<dbReference type="EMBL" id="AX207690">
    <property type="protein sequence ID" value="CAC60363.1"/>
    <property type="status" value="ALT_INIT"/>
    <property type="molecule type" value="Unassigned_DNA"/>
</dbReference>
<dbReference type="EMBL" id="AY847775">
    <property type="protein sequence ID" value="AAW31850.1"/>
    <property type="molecule type" value="mRNA"/>
</dbReference>
<dbReference type="EMBL" id="BC133063">
    <property type="protein sequence ID" value="AAI33064.1"/>
    <property type="molecule type" value="mRNA"/>
</dbReference>
<dbReference type="RefSeq" id="NP_954862.2">
    <property type="nucleotide sequence ID" value="NM_199253.2"/>
</dbReference>
<dbReference type="SMR" id="P59996"/>
<dbReference type="FunCoup" id="P59996">
    <property type="interactions" value="19"/>
</dbReference>
<dbReference type="STRING" id="10116.ENSRNOP00000008536"/>
<dbReference type="MEROPS" id="S08.039"/>
<dbReference type="GlyCosmos" id="P59996">
    <property type="glycosylation" value="1 site, No reported glycans"/>
</dbReference>
<dbReference type="GlyGen" id="P59996">
    <property type="glycosylation" value="1 site"/>
</dbReference>
<dbReference type="iPTMnet" id="P59996"/>
<dbReference type="PhosphoSitePlus" id="P59996"/>
<dbReference type="PaxDb" id="10116-ENSRNOP00000008536"/>
<dbReference type="ABCD" id="P59996">
    <property type="antibodies" value="2 sequenced antibodies"/>
</dbReference>
<dbReference type="Ensembl" id="ENSRNOT00000008535.6">
    <property type="protein sequence ID" value="ENSRNOP00000008536.5"/>
    <property type="gene ID" value="ENSRNOG00000006280.6"/>
</dbReference>
<dbReference type="GeneID" id="298296"/>
<dbReference type="KEGG" id="rno:298296"/>
<dbReference type="UCSC" id="RGD:728909">
    <property type="organism name" value="rat"/>
</dbReference>
<dbReference type="AGR" id="RGD:728909"/>
<dbReference type="CTD" id="255738"/>
<dbReference type="RGD" id="728909">
    <property type="gene designation" value="Pcsk9"/>
</dbReference>
<dbReference type="eggNOG" id="KOG1153">
    <property type="taxonomic scope" value="Eukaryota"/>
</dbReference>
<dbReference type="GeneTree" id="ENSGT00490000043472"/>
<dbReference type="HOGENOM" id="CLU_011263_11_0_1"/>
<dbReference type="InParanoid" id="P59996"/>
<dbReference type="OMA" id="GEEMMGC"/>
<dbReference type="OrthoDB" id="206201at2759"/>
<dbReference type="PhylomeDB" id="P59996"/>
<dbReference type="TreeFam" id="TF106271"/>
<dbReference type="Reactome" id="R-RNO-381426">
    <property type="pathway name" value="Regulation of Insulin-like Growth Factor (IGF) transport and uptake by Insulin-like Growth Factor Binding Proteins (IGFBPs)"/>
</dbReference>
<dbReference type="Reactome" id="R-RNO-8866427">
    <property type="pathway name" value="VLDLR internalisation and degradation"/>
</dbReference>
<dbReference type="Reactome" id="R-RNO-8957275">
    <property type="pathway name" value="Post-translational protein phosphorylation"/>
</dbReference>
<dbReference type="Reactome" id="R-RNO-8964038">
    <property type="pathway name" value="LDL clearance"/>
</dbReference>
<dbReference type="PRO" id="PR:P59996"/>
<dbReference type="Proteomes" id="UP000002494">
    <property type="component" value="Chromosome 5"/>
</dbReference>
<dbReference type="Bgee" id="ENSRNOG00000006280">
    <property type="expression patterns" value="Expressed in liver and 6 other cell types or tissues"/>
</dbReference>
<dbReference type="GO" id="GO:0009986">
    <property type="term" value="C:cell surface"/>
    <property type="evidence" value="ECO:0000250"/>
    <property type="project" value="UniProtKB"/>
</dbReference>
<dbReference type="GO" id="GO:0030134">
    <property type="term" value="C:COPII-coated ER to Golgi transport vesicle"/>
    <property type="evidence" value="ECO:0000266"/>
    <property type="project" value="RGD"/>
</dbReference>
<dbReference type="GO" id="GO:0005737">
    <property type="term" value="C:cytoplasm"/>
    <property type="evidence" value="ECO:0000250"/>
    <property type="project" value="UniProtKB"/>
</dbReference>
<dbReference type="GO" id="GO:0005769">
    <property type="term" value="C:early endosome"/>
    <property type="evidence" value="ECO:0000250"/>
    <property type="project" value="UniProtKB"/>
</dbReference>
<dbReference type="GO" id="GO:0005783">
    <property type="term" value="C:endoplasmic reticulum"/>
    <property type="evidence" value="ECO:0000250"/>
    <property type="project" value="UniProtKB"/>
</dbReference>
<dbReference type="GO" id="GO:0005576">
    <property type="term" value="C:extracellular region"/>
    <property type="evidence" value="ECO:0000266"/>
    <property type="project" value="RGD"/>
</dbReference>
<dbReference type="GO" id="GO:0005615">
    <property type="term" value="C:extracellular space"/>
    <property type="evidence" value="ECO:0000314"/>
    <property type="project" value="RGD"/>
</dbReference>
<dbReference type="GO" id="GO:0005794">
    <property type="term" value="C:Golgi apparatus"/>
    <property type="evidence" value="ECO:0000250"/>
    <property type="project" value="UniProtKB"/>
</dbReference>
<dbReference type="GO" id="GO:0005770">
    <property type="term" value="C:late endosome"/>
    <property type="evidence" value="ECO:0000250"/>
    <property type="project" value="UniProtKB"/>
</dbReference>
<dbReference type="GO" id="GO:0005764">
    <property type="term" value="C:lysosome"/>
    <property type="evidence" value="ECO:0000250"/>
    <property type="project" value="UniProtKB"/>
</dbReference>
<dbReference type="GO" id="GO:1990667">
    <property type="term" value="C:PCSK9-AnxA2 complex"/>
    <property type="evidence" value="ECO:0000266"/>
    <property type="project" value="RGD"/>
</dbReference>
<dbReference type="GO" id="GO:1990666">
    <property type="term" value="C:PCSK9-LDLR complex"/>
    <property type="evidence" value="ECO:0000266"/>
    <property type="project" value="RGD"/>
</dbReference>
<dbReference type="GO" id="GO:0048471">
    <property type="term" value="C:perinuclear region of cytoplasm"/>
    <property type="evidence" value="ECO:0000266"/>
    <property type="project" value="RGD"/>
</dbReference>
<dbReference type="GO" id="GO:0005886">
    <property type="term" value="C:plasma membrane"/>
    <property type="evidence" value="ECO:0000266"/>
    <property type="project" value="RGD"/>
</dbReference>
<dbReference type="GO" id="GO:0034185">
    <property type="term" value="F:apolipoprotein binding"/>
    <property type="evidence" value="ECO:0000250"/>
    <property type="project" value="UniProtKB"/>
</dbReference>
<dbReference type="GO" id="GO:0034190">
    <property type="term" value="F:apolipoprotein receptor binding"/>
    <property type="evidence" value="ECO:0000266"/>
    <property type="project" value="RGD"/>
</dbReference>
<dbReference type="GO" id="GO:0030169">
    <property type="term" value="F:low-density lipoprotein particle binding"/>
    <property type="evidence" value="ECO:0000250"/>
    <property type="project" value="UniProtKB"/>
</dbReference>
<dbReference type="GO" id="GO:0050750">
    <property type="term" value="F:low-density lipoprotein particle receptor binding"/>
    <property type="evidence" value="ECO:0000250"/>
    <property type="project" value="HGNC-UCL"/>
</dbReference>
<dbReference type="GO" id="GO:0004252">
    <property type="term" value="F:serine-type endopeptidase activity"/>
    <property type="evidence" value="ECO:0000250"/>
    <property type="project" value="HGNC-UCL"/>
</dbReference>
<dbReference type="GO" id="GO:0030547">
    <property type="term" value="F:signaling receptor inhibitor activity"/>
    <property type="evidence" value="ECO:0000266"/>
    <property type="project" value="RGD"/>
</dbReference>
<dbReference type="GO" id="GO:0019871">
    <property type="term" value="F:sodium channel inhibitor activity"/>
    <property type="evidence" value="ECO:0000266"/>
    <property type="project" value="RGD"/>
</dbReference>
<dbReference type="GO" id="GO:0034189">
    <property type="term" value="F:very-low-density lipoprotein particle binding"/>
    <property type="evidence" value="ECO:0000250"/>
    <property type="project" value="UniProtKB"/>
</dbReference>
<dbReference type="GO" id="GO:0070326">
    <property type="term" value="F:very-low-density lipoprotein particle receptor binding"/>
    <property type="evidence" value="ECO:0000266"/>
    <property type="project" value="RGD"/>
</dbReference>
<dbReference type="GO" id="GO:0006915">
    <property type="term" value="P:apoptotic process"/>
    <property type="evidence" value="ECO:0007669"/>
    <property type="project" value="UniProtKB-KW"/>
</dbReference>
<dbReference type="GO" id="GO:0032869">
    <property type="term" value="P:cellular response to insulin stimulus"/>
    <property type="evidence" value="ECO:0000314"/>
    <property type="project" value="HGNC-UCL"/>
</dbReference>
<dbReference type="GO" id="GO:0009267">
    <property type="term" value="P:cellular response to starvation"/>
    <property type="evidence" value="ECO:0000314"/>
    <property type="project" value="HGNC-UCL"/>
</dbReference>
<dbReference type="GO" id="GO:0042632">
    <property type="term" value="P:cholesterol homeostasis"/>
    <property type="evidence" value="ECO:0000270"/>
    <property type="project" value="RGD"/>
</dbReference>
<dbReference type="GO" id="GO:0008203">
    <property type="term" value="P:cholesterol metabolic process"/>
    <property type="evidence" value="ECO:0000266"/>
    <property type="project" value="RGD"/>
</dbReference>
<dbReference type="GO" id="GO:0001822">
    <property type="term" value="P:kidney development"/>
    <property type="evidence" value="ECO:0000270"/>
    <property type="project" value="HGNC-UCL"/>
</dbReference>
<dbReference type="GO" id="GO:0042157">
    <property type="term" value="P:lipoprotein metabolic process"/>
    <property type="evidence" value="ECO:0000266"/>
    <property type="project" value="RGD"/>
</dbReference>
<dbReference type="GO" id="GO:0001889">
    <property type="term" value="P:liver development"/>
    <property type="evidence" value="ECO:0000270"/>
    <property type="project" value="HGNC-UCL"/>
</dbReference>
<dbReference type="GO" id="GO:0032802">
    <property type="term" value="P:low-density lipoprotein particle receptor catabolic process"/>
    <property type="evidence" value="ECO:0000250"/>
    <property type="project" value="UniProtKB"/>
</dbReference>
<dbReference type="GO" id="GO:0032799">
    <property type="term" value="P:low-density lipoprotein receptor particle metabolic process"/>
    <property type="evidence" value="ECO:0000266"/>
    <property type="project" value="RGD"/>
</dbReference>
<dbReference type="GO" id="GO:0007041">
    <property type="term" value="P:lysosomal transport"/>
    <property type="evidence" value="ECO:0000266"/>
    <property type="project" value="RGD"/>
</dbReference>
<dbReference type="GO" id="GO:0010989">
    <property type="term" value="P:negative regulation of low-density lipoprotein particle clearance"/>
    <property type="evidence" value="ECO:0000266"/>
    <property type="project" value="RGD"/>
</dbReference>
<dbReference type="GO" id="GO:0002091">
    <property type="term" value="P:negative regulation of receptor internalization"/>
    <property type="evidence" value="ECO:0000266"/>
    <property type="project" value="RGD"/>
</dbReference>
<dbReference type="GO" id="GO:0001920">
    <property type="term" value="P:negative regulation of receptor recycling"/>
    <property type="evidence" value="ECO:0000266"/>
    <property type="project" value="RGD"/>
</dbReference>
<dbReference type="GO" id="GO:1905601">
    <property type="term" value="P:negative regulation of receptor-mediated endocytosis involved in cholesterol transport"/>
    <property type="evidence" value="ECO:0000266"/>
    <property type="project" value="RGD"/>
</dbReference>
<dbReference type="GO" id="GO:0022008">
    <property type="term" value="P:neurogenesis"/>
    <property type="evidence" value="ECO:0000270"/>
    <property type="project" value="HGNC-UCL"/>
</dbReference>
<dbReference type="GO" id="GO:0030182">
    <property type="term" value="P:neuron differentiation"/>
    <property type="evidence" value="ECO:0000250"/>
    <property type="project" value="HGNC-UCL"/>
</dbReference>
<dbReference type="GO" id="GO:0006644">
    <property type="term" value="P:phospholipid metabolic process"/>
    <property type="evidence" value="ECO:0000266"/>
    <property type="project" value="RGD"/>
</dbReference>
<dbReference type="GO" id="GO:0032805">
    <property type="term" value="P:positive regulation of low-density lipoprotein particle receptor catabolic process"/>
    <property type="evidence" value="ECO:0000266"/>
    <property type="project" value="RGD"/>
</dbReference>
<dbReference type="GO" id="GO:0043525">
    <property type="term" value="P:positive regulation of neuron apoptotic process"/>
    <property type="evidence" value="ECO:0000314"/>
    <property type="project" value="HGNC-UCL"/>
</dbReference>
<dbReference type="GO" id="GO:0002092">
    <property type="term" value="P:positive regulation of receptor internalization"/>
    <property type="evidence" value="ECO:0000266"/>
    <property type="project" value="RGD"/>
</dbReference>
<dbReference type="GO" id="GO:0016540">
    <property type="term" value="P:protein autoprocessing"/>
    <property type="evidence" value="ECO:0000314"/>
    <property type="project" value="RGD"/>
</dbReference>
<dbReference type="GO" id="GO:0016485">
    <property type="term" value="P:protein processing"/>
    <property type="evidence" value="ECO:0000314"/>
    <property type="project" value="RGD"/>
</dbReference>
<dbReference type="GO" id="GO:0032803">
    <property type="term" value="P:regulation of low-density lipoprotein particle receptor catabolic process"/>
    <property type="evidence" value="ECO:0000266"/>
    <property type="project" value="RGD"/>
</dbReference>
<dbReference type="GO" id="GO:0043523">
    <property type="term" value="P:regulation of neuron apoptotic process"/>
    <property type="evidence" value="ECO:0000250"/>
    <property type="project" value="UniProtKB"/>
</dbReference>
<dbReference type="GO" id="GO:0006641">
    <property type="term" value="P:triglyceride metabolic process"/>
    <property type="evidence" value="ECO:0000266"/>
    <property type="project" value="RGD"/>
</dbReference>
<dbReference type="CDD" id="cd04077">
    <property type="entry name" value="Peptidases_S8_PCSK9_ProteinaseK_like"/>
    <property type="match status" value="1"/>
</dbReference>
<dbReference type="FunFam" id="2.60.120.690:FF:000001">
    <property type="entry name" value="Proprotein convertase subtilisin/kexin type 9"/>
    <property type="match status" value="1"/>
</dbReference>
<dbReference type="FunFam" id="3.30.70.80:FF:000004">
    <property type="entry name" value="Proprotein convertase subtilisin/kexin type 9"/>
    <property type="match status" value="1"/>
</dbReference>
<dbReference type="FunFam" id="3.40.50.200:FF:000016">
    <property type="entry name" value="Proprotein convertase subtilisin/kexin type 9"/>
    <property type="match status" value="1"/>
</dbReference>
<dbReference type="Gene3D" id="3.30.70.80">
    <property type="entry name" value="Peptidase S8 propeptide/proteinase inhibitor I9"/>
    <property type="match status" value="1"/>
</dbReference>
<dbReference type="Gene3D" id="3.40.50.200">
    <property type="entry name" value="Peptidase S8/S53 domain"/>
    <property type="match status" value="1"/>
</dbReference>
<dbReference type="Gene3D" id="2.60.120.690">
    <property type="entry name" value="Proprotein convertase subtilisin/kexin type 9"/>
    <property type="match status" value="1"/>
</dbReference>
<dbReference type="InterPro" id="IPR041254">
    <property type="entry name" value="PCSK9_C1"/>
</dbReference>
<dbReference type="InterPro" id="IPR041052">
    <property type="entry name" value="PCSK9_C2"/>
</dbReference>
<dbReference type="InterPro" id="IPR041051">
    <property type="entry name" value="PCSK9_C3"/>
</dbReference>
<dbReference type="InterPro" id="IPR034193">
    <property type="entry name" value="PCSK9_ProteinaseK-like"/>
</dbReference>
<dbReference type="InterPro" id="IPR000209">
    <property type="entry name" value="Peptidase_S8/S53_dom"/>
</dbReference>
<dbReference type="InterPro" id="IPR036852">
    <property type="entry name" value="Peptidase_S8/S53_dom_sf"/>
</dbReference>
<dbReference type="InterPro" id="IPR050131">
    <property type="entry name" value="Peptidase_S8_subtilisin-like"/>
</dbReference>
<dbReference type="InterPro" id="IPR015500">
    <property type="entry name" value="Peptidase_S8_subtilisin-rel"/>
</dbReference>
<dbReference type="InterPro" id="IPR010259">
    <property type="entry name" value="S8pro/Inhibitor_I9"/>
</dbReference>
<dbReference type="InterPro" id="IPR037045">
    <property type="entry name" value="S8pro/Inhibitor_I9_sf"/>
</dbReference>
<dbReference type="PANTHER" id="PTHR43806">
    <property type="entry name" value="PEPTIDASE S8"/>
    <property type="match status" value="1"/>
</dbReference>
<dbReference type="PANTHER" id="PTHR43806:SF60">
    <property type="entry name" value="PROPROTEIN CONVERTASE SUBTILISIN_KEXIN TYPE 9"/>
    <property type="match status" value="1"/>
</dbReference>
<dbReference type="Pfam" id="PF05922">
    <property type="entry name" value="Inhibitor_I9"/>
    <property type="match status" value="1"/>
</dbReference>
<dbReference type="Pfam" id="PF18459">
    <property type="entry name" value="PCSK9_C1"/>
    <property type="match status" value="1"/>
</dbReference>
<dbReference type="Pfam" id="PF18464">
    <property type="entry name" value="PCSK9_C2"/>
    <property type="match status" value="1"/>
</dbReference>
<dbReference type="Pfam" id="PF18463">
    <property type="entry name" value="PCSK9_C3"/>
    <property type="match status" value="1"/>
</dbReference>
<dbReference type="Pfam" id="PF00082">
    <property type="entry name" value="Peptidase_S8"/>
    <property type="match status" value="1"/>
</dbReference>
<dbReference type="PRINTS" id="PR00723">
    <property type="entry name" value="SUBTILISIN"/>
</dbReference>
<dbReference type="SUPFAM" id="SSF54897">
    <property type="entry name" value="Protease propeptides/inhibitors"/>
    <property type="match status" value="1"/>
</dbReference>
<dbReference type="SUPFAM" id="SSF52743">
    <property type="entry name" value="Subtilisin-like"/>
    <property type="match status" value="1"/>
</dbReference>
<dbReference type="PROSITE" id="PS51892">
    <property type="entry name" value="SUBTILASE"/>
    <property type="match status" value="1"/>
</dbReference>
<protein>
    <recommendedName>
        <fullName>Proprotein convertase subtilisin/kexin type 9</fullName>
        <ecNumber>3.4.21.-</ecNumber>
    </recommendedName>
    <alternativeName>
        <fullName>Neural apoptosis-regulated convertase 1</fullName>
        <shortName>NARC-1</shortName>
    </alternativeName>
    <alternativeName>
        <fullName>Proprotein convertase 9</fullName>
        <shortName>PC9</shortName>
    </alternativeName>
    <alternativeName>
        <fullName>Subtilisin/kexin-like protease PC9</fullName>
    </alternativeName>
</protein>
<proteinExistence type="evidence at protein level"/>
<sequence length="691" mass="74709">MGIRCSTWLRWPLSPQLLLLLLLCPTGSRAQDEDGDYEELMLALPSQEDSLVDEASHVATATFRRCSKEAWRLPGTYVVVLMEETQRLQVEQTAHRLQTWAARRGYVIKVLHVFYDLFPGFLVKMSSDLLGLALKLPHVEYIEEDSLVFAQSIPWNLERIIPAWQQTEEDSSPDGSSQVEVYLLDTSIQSGHREIEGRVTITDFNSVPEEDGTRFHRQASKCDSHGTHLAGVVSGRDAGVAKGTSLHSLRVLNCQGKGTVSGTLIGLEFIRKSQLIQPSGPLVVLLPLAGGYSRILNTACQRLARTGVVLVAAAGNFRDDACLYSPASAPEVITVGATNAQDQPVTLGTLGTNFGRCVDLFAPGKDIIGASSDCSTCYMSQSGTSQAAAHVAGIVAMMLNRDPALTLAELRQRLILFSTKDVINMAWFPEDQRVLTPNRVATLPPSTQETGGQLLCRTVWSAHSGPTRTATATARCAPEEELLSCSSFSRSGRRRGDRIEAIGGQQVCKALNAFGGEGVYAVARCCLLPRVNCSIHNTPAARAGPQTPVHCHQKDHVLTGCSFHWEVENLRAQQQPLLRSRHQPGQCVGHQEASVHASCCHAPGLECKIKEHGIAGPAEQVTVACEAGWTLTGCNVLPGASLPLGAYSVDNVCVARIRDAGRADRTSEEATVAAAICCRSRPSAKASWVHQ</sequence>